<organism>
    <name type="scientific">Colwellia psychrerythraea (strain 34H / ATCC BAA-681)</name>
    <name type="common">Vibrio psychroerythus</name>
    <dbReference type="NCBI Taxonomy" id="167879"/>
    <lineage>
        <taxon>Bacteria</taxon>
        <taxon>Pseudomonadati</taxon>
        <taxon>Pseudomonadota</taxon>
        <taxon>Gammaproteobacteria</taxon>
        <taxon>Alteromonadales</taxon>
        <taxon>Colwelliaceae</taxon>
        <taxon>Colwellia</taxon>
    </lineage>
</organism>
<comment type="function">
    <text evidence="1">Catalyzes the final step of fatty acid oxidation in which acetyl-CoA is released and the CoA ester of a fatty acid two carbons shorter is formed.</text>
</comment>
<comment type="catalytic activity">
    <reaction evidence="1">
        <text>an acyl-CoA + acetyl-CoA = a 3-oxoacyl-CoA + CoA</text>
        <dbReference type="Rhea" id="RHEA:21564"/>
        <dbReference type="ChEBI" id="CHEBI:57287"/>
        <dbReference type="ChEBI" id="CHEBI:57288"/>
        <dbReference type="ChEBI" id="CHEBI:58342"/>
        <dbReference type="ChEBI" id="CHEBI:90726"/>
        <dbReference type="EC" id="2.3.1.16"/>
    </reaction>
</comment>
<comment type="pathway">
    <text evidence="1">Lipid metabolism; fatty acid beta-oxidation.</text>
</comment>
<comment type="subunit">
    <text evidence="1">Heterotetramer of two alpha chains (FadJ) and two beta chains (FadI).</text>
</comment>
<comment type="subcellular location">
    <subcellularLocation>
        <location evidence="1">Cytoplasm</location>
    </subcellularLocation>
</comment>
<comment type="similarity">
    <text evidence="1">Belongs to the thiolase-like superfamily. Thiolase family.</text>
</comment>
<protein>
    <recommendedName>
        <fullName evidence="1">3-ketoacyl-CoA thiolase</fullName>
        <ecNumber evidence="1">2.3.1.16</ecNumber>
    </recommendedName>
    <alternativeName>
        <fullName evidence="1">ACSs</fullName>
    </alternativeName>
    <alternativeName>
        <fullName evidence="1">Acetyl-CoA acyltransferase</fullName>
    </alternativeName>
    <alternativeName>
        <fullName evidence="1">Acyl-CoA ligase</fullName>
    </alternativeName>
    <alternativeName>
        <fullName evidence="1">Beta-ketothiolase</fullName>
    </alternativeName>
    <alternativeName>
        <fullName evidence="1">Fatty acid oxidation complex subunit beta</fullName>
    </alternativeName>
</protein>
<feature type="chain" id="PRO_0000206435" description="3-ketoacyl-CoA thiolase">
    <location>
        <begin position="1"/>
        <end position="435"/>
    </location>
</feature>
<feature type="active site" description="Acyl-thioester intermediate" evidence="1">
    <location>
        <position position="98"/>
    </location>
</feature>
<feature type="active site" description="Proton acceptor" evidence="1">
    <location>
        <position position="391"/>
    </location>
</feature>
<feature type="active site" description="Proton acceptor" evidence="1">
    <location>
        <position position="421"/>
    </location>
</feature>
<keyword id="KW-0012">Acyltransferase</keyword>
<keyword id="KW-0963">Cytoplasm</keyword>
<keyword id="KW-0276">Fatty acid metabolism</keyword>
<keyword id="KW-0442">Lipid degradation</keyword>
<keyword id="KW-0443">Lipid metabolism</keyword>
<keyword id="KW-0808">Transferase</keyword>
<accession>Q47ZB6</accession>
<sequence>MTIKRLTTSTGERIAIVAGLRTPFAKQATAFHGVPAVDLGKIVVNELLQKHDVDPGIIDQLVFGQVVQMPEAPNIAREIVLGTGMNTRTDAYSVSRACATSFQSTVNVAESIMAGHVDVGIAGGADSSSVAPIGVSKKLARTLVDLTKARSLGQRLSLLSRLGLKDLLPVSPAVAEYSTGISMGQTAEQMAKTYQISRQDQDALAHRSHTLATKSWQEGKLAGEVMTVHAEPYKSFIDRDNCFRENSVLESYAKLKPVFDRKHGTVTAATSTPLTDGGAAILLMREGRAKELGYKPLGYIRSFGFAAIDVWQDMLMGPSYATPIALQRAGMNLADLDLIEMHEAFAAQALANMKMFGSTKFAQEQLGRDKAIGDIDMDKFNVMGGSLAYGHPFAATGARLITQTLNELNRRGGGVGLTTACAAGGLGAAMIVETD</sequence>
<gene>
    <name evidence="1" type="primary">fadI</name>
    <name type="ordered locus">CPS_3157</name>
</gene>
<reference key="1">
    <citation type="journal article" date="2005" name="Proc. Natl. Acad. Sci. U.S.A.">
        <title>The psychrophilic lifestyle as revealed by the genome sequence of Colwellia psychrerythraea 34H through genomic and proteomic analyses.</title>
        <authorList>
            <person name="Methe B.A."/>
            <person name="Nelson K.E."/>
            <person name="Deming J.W."/>
            <person name="Momen B."/>
            <person name="Melamud E."/>
            <person name="Zhang X."/>
            <person name="Moult J."/>
            <person name="Madupu R."/>
            <person name="Nelson W.C."/>
            <person name="Dodson R.J."/>
            <person name="Brinkac L.M."/>
            <person name="Daugherty S.C."/>
            <person name="Durkin A.S."/>
            <person name="DeBoy R.T."/>
            <person name="Kolonay J.F."/>
            <person name="Sullivan S.A."/>
            <person name="Zhou L."/>
            <person name="Davidsen T.M."/>
            <person name="Wu M."/>
            <person name="Huston A.L."/>
            <person name="Lewis M."/>
            <person name="Weaver B."/>
            <person name="Weidman J.F."/>
            <person name="Khouri H."/>
            <person name="Utterback T.R."/>
            <person name="Feldblyum T.V."/>
            <person name="Fraser C.M."/>
        </authorList>
    </citation>
    <scope>NUCLEOTIDE SEQUENCE [LARGE SCALE GENOMIC DNA]</scope>
    <source>
        <strain>34H / ATCC BAA-681</strain>
    </source>
</reference>
<evidence type="ECO:0000255" key="1">
    <source>
        <dbReference type="HAMAP-Rule" id="MF_01618"/>
    </source>
</evidence>
<name>FADI_COLP3</name>
<dbReference type="EC" id="2.3.1.16" evidence="1"/>
<dbReference type="EMBL" id="CP000083">
    <property type="protein sequence ID" value="AAZ26685.1"/>
    <property type="molecule type" value="Genomic_DNA"/>
</dbReference>
<dbReference type="RefSeq" id="WP_011043941.1">
    <property type="nucleotide sequence ID" value="NC_003910.7"/>
</dbReference>
<dbReference type="SMR" id="Q47ZB6"/>
<dbReference type="STRING" id="167879.CPS_3157"/>
<dbReference type="KEGG" id="cps:CPS_3157"/>
<dbReference type="eggNOG" id="COG0183">
    <property type="taxonomic scope" value="Bacteria"/>
</dbReference>
<dbReference type="HOGENOM" id="CLU_031026_2_0_6"/>
<dbReference type="UniPathway" id="UPA00659"/>
<dbReference type="Proteomes" id="UP000000547">
    <property type="component" value="Chromosome"/>
</dbReference>
<dbReference type="GO" id="GO:0005829">
    <property type="term" value="C:cytosol"/>
    <property type="evidence" value="ECO:0007669"/>
    <property type="project" value="TreeGrafter"/>
</dbReference>
<dbReference type="GO" id="GO:0003988">
    <property type="term" value="F:acetyl-CoA C-acyltransferase activity"/>
    <property type="evidence" value="ECO:0007669"/>
    <property type="project" value="UniProtKB-UniRule"/>
</dbReference>
<dbReference type="GO" id="GO:0006635">
    <property type="term" value="P:fatty acid beta-oxidation"/>
    <property type="evidence" value="ECO:0007669"/>
    <property type="project" value="UniProtKB-UniRule"/>
</dbReference>
<dbReference type="CDD" id="cd00751">
    <property type="entry name" value="thiolase"/>
    <property type="match status" value="1"/>
</dbReference>
<dbReference type="FunFam" id="3.40.47.10:FF:000011">
    <property type="entry name" value="3-ketoacyl-CoA thiolase"/>
    <property type="match status" value="1"/>
</dbReference>
<dbReference type="Gene3D" id="3.40.47.10">
    <property type="match status" value="1"/>
</dbReference>
<dbReference type="HAMAP" id="MF_01618">
    <property type="entry name" value="FadI"/>
    <property type="match status" value="1"/>
</dbReference>
<dbReference type="InterPro" id="IPR012806">
    <property type="entry name" value="Ac-CoA_C-AcTrfase_FadI"/>
</dbReference>
<dbReference type="InterPro" id="IPR002155">
    <property type="entry name" value="Thiolase"/>
</dbReference>
<dbReference type="InterPro" id="IPR016039">
    <property type="entry name" value="Thiolase-like"/>
</dbReference>
<dbReference type="InterPro" id="IPR020610">
    <property type="entry name" value="Thiolase_AS"/>
</dbReference>
<dbReference type="InterPro" id="IPR020617">
    <property type="entry name" value="Thiolase_C"/>
</dbReference>
<dbReference type="InterPro" id="IPR020613">
    <property type="entry name" value="Thiolase_CS"/>
</dbReference>
<dbReference type="InterPro" id="IPR020616">
    <property type="entry name" value="Thiolase_N"/>
</dbReference>
<dbReference type="NCBIfam" id="TIGR01930">
    <property type="entry name" value="AcCoA-C-Actrans"/>
    <property type="match status" value="1"/>
</dbReference>
<dbReference type="NCBIfam" id="TIGR02446">
    <property type="entry name" value="FadI"/>
    <property type="match status" value="1"/>
</dbReference>
<dbReference type="NCBIfam" id="NF006516">
    <property type="entry name" value="PRK08963.1"/>
    <property type="match status" value="1"/>
</dbReference>
<dbReference type="PANTHER" id="PTHR18919:SF107">
    <property type="entry name" value="ACETYL-COA ACETYLTRANSFERASE, CYTOSOLIC"/>
    <property type="match status" value="1"/>
</dbReference>
<dbReference type="PANTHER" id="PTHR18919">
    <property type="entry name" value="ACETYL-COA C-ACYLTRANSFERASE"/>
    <property type="match status" value="1"/>
</dbReference>
<dbReference type="Pfam" id="PF02803">
    <property type="entry name" value="Thiolase_C"/>
    <property type="match status" value="1"/>
</dbReference>
<dbReference type="Pfam" id="PF00108">
    <property type="entry name" value="Thiolase_N"/>
    <property type="match status" value="1"/>
</dbReference>
<dbReference type="PIRSF" id="PIRSF000429">
    <property type="entry name" value="Ac-CoA_Ac_transf"/>
    <property type="match status" value="1"/>
</dbReference>
<dbReference type="SUPFAM" id="SSF53901">
    <property type="entry name" value="Thiolase-like"/>
    <property type="match status" value="2"/>
</dbReference>
<dbReference type="PROSITE" id="PS00737">
    <property type="entry name" value="THIOLASE_2"/>
    <property type="match status" value="1"/>
</dbReference>
<dbReference type="PROSITE" id="PS00099">
    <property type="entry name" value="THIOLASE_3"/>
    <property type="match status" value="1"/>
</dbReference>
<proteinExistence type="inferred from homology"/>